<comment type="function">
    <text>Involved in maceration and soft-rotting of plant tissue. Hydrolyzes the 1,4-alpha glycosidic bonds of de-esterified pectate in the smooth region of the plant cell wall.</text>
</comment>
<comment type="catalytic activity">
    <reaction>
        <text>(1,4-alpha-D-galacturonosyl)n+m + H2O = (1,4-alpha-D-galacturonosyl)n + (1,4-alpha-D-galacturonosyl)m.</text>
        <dbReference type="EC" id="3.2.1.15"/>
    </reaction>
</comment>
<comment type="subcellular location">
    <subcellularLocation>
        <location evidence="5">Secreted</location>
    </subcellularLocation>
</comment>
<comment type="similarity">
    <text evidence="5">Belongs to the glycosyl hydrolase 28 family.</text>
</comment>
<name>PGLR2_ASPNA</name>
<dbReference type="EC" id="3.2.1.15"/>
<dbReference type="EMBL" id="X58893">
    <property type="protein sequence ID" value="CAA41694.1"/>
    <property type="molecule type" value="Genomic_DNA"/>
</dbReference>
<dbReference type="EMBL" id="ACJE01000008">
    <property type="protein sequence ID" value="EHA24775.1"/>
    <property type="molecule type" value="Genomic_DNA"/>
</dbReference>
<dbReference type="PIR" id="S12895">
    <property type="entry name" value="S12895"/>
</dbReference>
<dbReference type="RefSeq" id="XP_001397067.1">
    <property type="nucleotide sequence ID" value="XM_001397030.1"/>
</dbReference>
<dbReference type="PDB" id="1CZF">
    <property type="method" value="X-ray"/>
    <property type="resolution" value="1.68 A"/>
    <property type="chains" value="A/B=1-362"/>
</dbReference>
<dbReference type="PDBsum" id="1CZF"/>
<dbReference type="SMR" id="P26214"/>
<dbReference type="STRING" id="380704.P26214"/>
<dbReference type="CAZy" id="GH28">
    <property type="family name" value="Glycoside Hydrolase Family 28"/>
</dbReference>
<dbReference type="GlyConnect" id="126">
    <property type="glycosylation" value="7 N-Linked glycans"/>
</dbReference>
<dbReference type="GlyCosmos" id="P26214">
    <property type="glycosylation" value="1 site, 12 glycans"/>
</dbReference>
<dbReference type="GeneID" id="4988138"/>
<dbReference type="KEGG" id="ang:An15g05370"/>
<dbReference type="VEuPathDB" id="FungiDB:ASPNIDRAFT2_1143631"/>
<dbReference type="OrthoDB" id="96161at5052"/>
<dbReference type="BRENDA" id="3.2.1.15">
    <property type="organism ID" value="518"/>
</dbReference>
<dbReference type="SABIO-RK" id="P26214"/>
<dbReference type="EvolutionaryTrace" id="P26214"/>
<dbReference type="Proteomes" id="UP000009038">
    <property type="component" value="Unassembled WGS sequence"/>
</dbReference>
<dbReference type="GO" id="GO:0005576">
    <property type="term" value="C:extracellular region"/>
    <property type="evidence" value="ECO:0007669"/>
    <property type="project" value="UniProtKB-SubCell"/>
</dbReference>
<dbReference type="GO" id="GO:0004650">
    <property type="term" value="F:polygalacturonase activity"/>
    <property type="evidence" value="ECO:0007669"/>
    <property type="project" value="UniProtKB-EC"/>
</dbReference>
<dbReference type="GO" id="GO:0071555">
    <property type="term" value="P:cell wall organization"/>
    <property type="evidence" value="ECO:0007669"/>
    <property type="project" value="UniProtKB-KW"/>
</dbReference>
<dbReference type="GO" id="GO:0045490">
    <property type="term" value="P:pectin catabolic process"/>
    <property type="evidence" value="ECO:0007669"/>
    <property type="project" value="UniProtKB-ARBA"/>
</dbReference>
<dbReference type="FunFam" id="2.160.20.10:FF:000002">
    <property type="entry name" value="Endopolygalacturonase D"/>
    <property type="match status" value="1"/>
</dbReference>
<dbReference type="Gene3D" id="2.160.20.10">
    <property type="entry name" value="Single-stranded right-handed beta-helix, Pectin lyase-like"/>
    <property type="match status" value="1"/>
</dbReference>
<dbReference type="InterPro" id="IPR000743">
    <property type="entry name" value="Glyco_hydro_28"/>
</dbReference>
<dbReference type="InterPro" id="IPR050434">
    <property type="entry name" value="Glycosyl_hydrlase_28"/>
</dbReference>
<dbReference type="InterPro" id="IPR006626">
    <property type="entry name" value="PbH1"/>
</dbReference>
<dbReference type="InterPro" id="IPR012334">
    <property type="entry name" value="Pectin_lyas_fold"/>
</dbReference>
<dbReference type="InterPro" id="IPR011050">
    <property type="entry name" value="Pectin_lyase_fold/virulence"/>
</dbReference>
<dbReference type="PANTHER" id="PTHR31884:SF13">
    <property type="entry name" value="ENDOPOLYGALACTURONASE B"/>
    <property type="match status" value="1"/>
</dbReference>
<dbReference type="PANTHER" id="PTHR31884">
    <property type="entry name" value="POLYGALACTURONASE"/>
    <property type="match status" value="1"/>
</dbReference>
<dbReference type="Pfam" id="PF00295">
    <property type="entry name" value="Glyco_hydro_28"/>
    <property type="match status" value="1"/>
</dbReference>
<dbReference type="SMART" id="SM00710">
    <property type="entry name" value="PbH1"/>
    <property type="match status" value="5"/>
</dbReference>
<dbReference type="SUPFAM" id="SSF51126">
    <property type="entry name" value="Pectin lyase-like"/>
    <property type="match status" value="1"/>
</dbReference>
<dbReference type="PROSITE" id="PS00502">
    <property type="entry name" value="POLYGALACTURONASE"/>
    <property type="match status" value="1"/>
</dbReference>
<sequence length="362" mass="37684">MHSFASLLAYGLVAGATFASASPIEARDSCTFTTAAAAKAGKAKCSTITLNNIEVPAGTTLDLTGLTSGTKVIFEGTTTFQYEEWAGPLISMSGEHITVTGASGHLINCDGARWWDGKGTSGKKKPKFFYAHGLDSSSITGLNIKNTPLMAFSVQANDITFTDVTINNADGDTQGGHNTDAFDVGNSVGVNIIKPWVHNQDDCLAVNSGENIWFTGGTCIGGHGLSIGSVGDRSNNVVKNVTIEHSTVSNSENAVRIKTISGATGSVSEITYSNIVMSGISDYGVVIQQDYEDGKPTGKPTNGVTIQDVKLESVTGSVDSGATEIYLLCGSGSCSDWTWDDVKVTGGKKSTACKNFPSVASC</sequence>
<proteinExistence type="evidence at protein level"/>
<evidence type="ECO:0000255" key="1"/>
<evidence type="ECO:0000269" key="2">
    <source>
    </source>
</evidence>
<evidence type="ECO:0000269" key="3">
    <source>
    </source>
</evidence>
<evidence type="ECO:0000269" key="4">
    <source>
    </source>
</evidence>
<evidence type="ECO:0000305" key="5"/>
<evidence type="ECO:0000305" key="6">
    <source>
    </source>
</evidence>
<evidence type="ECO:0007744" key="7">
    <source>
        <dbReference type="PDB" id="1CZF"/>
    </source>
</evidence>
<evidence type="ECO:0007829" key="8">
    <source>
        <dbReference type="PDB" id="1CZF"/>
    </source>
</evidence>
<accession>P26214</accession>
<accession>G3XYE5</accession>
<organism>
    <name type="scientific">Aspergillus niger (strain ATCC 1015 / CBS 113.46 / FGSC A1144 / LSHB Ac4 / NCTC 3858a / NRRL 328 / USDA 3528.7)</name>
    <dbReference type="NCBI Taxonomy" id="380704"/>
    <lineage>
        <taxon>Eukaryota</taxon>
        <taxon>Fungi</taxon>
        <taxon>Dikarya</taxon>
        <taxon>Ascomycota</taxon>
        <taxon>Pezizomycotina</taxon>
        <taxon>Eurotiomycetes</taxon>
        <taxon>Eurotiomycetidae</taxon>
        <taxon>Eurotiales</taxon>
        <taxon>Aspergillaceae</taxon>
        <taxon>Aspergillus</taxon>
        <taxon>Aspergillus subgen. Circumdati</taxon>
    </lineage>
</organism>
<feature type="signal peptide" evidence="1">
    <location>
        <begin position="1"/>
        <end position="21"/>
    </location>
</feature>
<feature type="propeptide" id="PRO_0000024770" evidence="3">
    <location>
        <begin position="22"/>
        <end position="27"/>
    </location>
</feature>
<feature type="chain" id="PRO_0000024771" description="Endopolygalacturonase II">
    <location>
        <begin position="28"/>
        <end position="362"/>
    </location>
</feature>
<feature type="repeat" description="PbH1 1" evidence="1">
    <location>
        <begin position="156"/>
        <end position="186"/>
    </location>
</feature>
<feature type="repeat" description="PbH1 2" evidence="1">
    <location>
        <begin position="209"/>
        <end position="229"/>
    </location>
</feature>
<feature type="repeat" description="PbH1 3" evidence="1">
    <location>
        <begin position="238"/>
        <end position="259"/>
    </location>
</feature>
<feature type="repeat" description="PbH1 4" evidence="1">
    <location>
        <begin position="267"/>
        <end position="289"/>
    </location>
</feature>
<feature type="repeat" description="PbH1 5" evidence="1">
    <location>
        <begin position="301"/>
        <end position="322"/>
    </location>
</feature>
<feature type="active site" description="Proton donor" evidence="6">
    <location>
        <position position="201"/>
    </location>
</feature>
<feature type="active site" evidence="6">
    <location>
        <position position="223"/>
    </location>
</feature>
<feature type="glycosylation site" id="CAR_000232" description="N-linked (GlcNAc...) (high mannose) asparagine" evidence="2 4">
    <location>
        <position position="240"/>
    </location>
</feature>
<feature type="disulfide bond" evidence="2 7">
    <location>
        <begin position="30"/>
        <end position="45"/>
    </location>
</feature>
<feature type="disulfide bond" evidence="2 7">
    <location>
        <begin position="203"/>
        <end position="219"/>
    </location>
</feature>
<feature type="disulfide bond" evidence="2 7">
    <location>
        <begin position="329"/>
        <end position="334"/>
    </location>
</feature>
<feature type="disulfide bond" evidence="2 7">
    <location>
        <begin position="353"/>
        <end position="362"/>
    </location>
</feature>
<feature type="mutagenesis site" description="Reduces activity by 99.9%. No effect on Km for substrate." evidence="2">
    <original>D</original>
    <variation>E</variation>
    <variation>N</variation>
    <location>
        <position position="180"/>
    </location>
</feature>
<feature type="mutagenesis site" description="Reduces activity by 99.9%. No effect on Km for substrate." evidence="2">
    <original>D</original>
    <variation>E</variation>
    <variation>N</variation>
    <location>
        <position position="201"/>
    </location>
</feature>
<feature type="mutagenesis site" description="Reduces activity by 99.4%. No effect on Km for substrate." evidence="2">
    <original>D</original>
    <variation>E</variation>
    <location>
        <position position="202"/>
    </location>
</feature>
<feature type="mutagenesis site" description="Reduces activity by 99.9%. No effect on Km for substrate." evidence="2">
    <original>D</original>
    <variation>N</variation>
    <location>
        <position position="202"/>
    </location>
</feature>
<feature type="mutagenesis site" description="Reduces activity by 99.5%. No effect on Km for substrate." evidence="2">
    <original>H</original>
    <variation>A</variation>
    <location>
        <position position="223"/>
    </location>
</feature>
<feature type="mutagenesis site" description="Reduces activity by 86%. Reduces Km for substrate 10-fold." evidence="2">
    <original>R</original>
    <variation>N</variation>
    <location>
        <position position="256"/>
    </location>
</feature>
<feature type="mutagenesis site" description="Reduces activity by 99.2%. Reduces Km for substrate 10-fold." evidence="2">
    <original>K</original>
    <variation>N</variation>
    <location>
        <position position="258"/>
    </location>
</feature>
<feature type="strand" evidence="8">
    <location>
        <begin position="29"/>
        <end position="34"/>
    </location>
</feature>
<feature type="helix" evidence="8">
    <location>
        <begin position="35"/>
        <end position="41"/>
    </location>
</feature>
<feature type="helix" evidence="8">
    <location>
        <begin position="42"/>
        <end position="44"/>
    </location>
</feature>
<feature type="strand" evidence="8">
    <location>
        <begin position="46"/>
        <end position="52"/>
    </location>
</feature>
<feature type="strand" evidence="8">
    <location>
        <begin position="61"/>
        <end position="63"/>
    </location>
</feature>
<feature type="strand" evidence="8">
    <location>
        <begin position="71"/>
        <end position="80"/>
    </location>
</feature>
<feature type="strand" evidence="8">
    <location>
        <begin position="89"/>
        <end position="96"/>
    </location>
</feature>
<feature type="strand" evidence="8">
    <location>
        <begin position="98"/>
        <end position="101"/>
    </location>
</feature>
<feature type="strand" evidence="8">
    <location>
        <begin position="106"/>
        <end position="108"/>
    </location>
</feature>
<feature type="helix" evidence="8">
    <location>
        <begin position="111"/>
        <end position="113"/>
    </location>
</feature>
<feature type="strand" evidence="8">
    <location>
        <begin position="121"/>
        <end position="123"/>
    </location>
</feature>
<feature type="strand" evidence="8">
    <location>
        <begin position="129"/>
        <end position="135"/>
    </location>
</feature>
<feature type="strand" evidence="8">
    <location>
        <begin position="137"/>
        <end position="141"/>
    </location>
</feature>
<feature type="strand" evidence="8">
    <location>
        <begin position="143"/>
        <end position="145"/>
    </location>
</feature>
<feature type="strand" evidence="8">
    <location>
        <begin position="152"/>
        <end position="155"/>
    </location>
</feature>
<feature type="strand" evidence="8">
    <location>
        <begin position="157"/>
        <end position="163"/>
    </location>
</feature>
<feature type="strand" evidence="8">
    <location>
        <begin position="165"/>
        <end position="167"/>
    </location>
</feature>
<feature type="helix" evidence="8">
    <location>
        <begin position="169"/>
        <end position="172"/>
    </location>
</feature>
<feature type="turn" evidence="8">
    <location>
        <begin position="173"/>
        <end position="175"/>
    </location>
</feature>
<feature type="strand" evidence="8">
    <location>
        <begin position="181"/>
        <end position="184"/>
    </location>
</feature>
<feature type="strand" evidence="8">
    <location>
        <begin position="188"/>
        <end position="194"/>
    </location>
</feature>
<feature type="strand" evidence="8">
    <location>
        <begin position="196"/>
        <end position="198"/>
    </location>
</feature>
<feature type="strand" evidence="8">
    <location>
        <begin position="203"/>
        <end position="216"/>
    </location>
</feature>
<feature type="strand" evidence="8">
    <location>
        <begin position="218"/>
        <end position="222"/>
    </location>
</feature>
<feature type="strand" evidence="8">
    <location>
        <begin position="225"/>
        <end position="230"/>
    </location>
</feature>
<feature type="strand" evidence="8">
    <location>
        <begin position="232"/>
        <end position="234"/>
    </location>
</feature>
<feature type="strand" evidence="8">
    <location>
        <begin position="237"/>
        <end position="260"/>
    </location>
</feature>
<feature type="strand" evidence="8">
    <location>
        <begin position="265"/>
        <end position="292"/>
    </location>
</feature>
<feature type="strand" evidence="8">
    <location>
        <begin position="302"/>
        <end position="318"/>
    </location>
</feature>
<feature type="strand" evidence="8">
    <location>
        <begin position="322"/>
        <end position="328"/>
    </location>
</feature>
<feature type="turn" evidence="8">
    <location>
        <begin position="331"/>
        <end position="333"/>
    </location>
</feature>
<feature type="strand" evidence="8">
    <location>
        <begin position="334"/>
        <end position="348"/>
    </location>
</feature>
<reference key="1">
    <citation type="journal article" date="1990" name="FEBS Lett.">
        <title>Molecular cloning, nucleotide sequence and expression of the gene encoding prepro-polygalacturonase II of Aspergillus niger.</title>
        <authorList>
            <person name="Bussink H.J.D."/>
            <person name="Kester H.C.M."/>
            <person name="Visser J."/>
        </authorList>
    </citation>
    <scope>NUCLEOTIDE SEQUENCE [GENOMIC DNA]</scope>
    <scope>PROTEIN SEQUENCE OF 28-40 AND 151-161</scope>
    <source>
        <strain>ATCC 9029 / NRRL 3 / CBS 120.49 / DSM 2466 / N400</strain>
    </source>
</reference>
<reference key="2">
    <citation type="journal article" date="2011" name="Genome Res.">
        <title>Comparative genomics of citric-acid-producing Aspergillus niger ATCC 1015 versus enzyme-producing CBS 513.88.</title>
        <authorList>
            <person name="Andersen M.R."/>
            <person name="Salazar M.P."/>
            <person name="Schaap P.J."/>
            <person name="van de Vondervoort P.J.I."/>
            <person name="Culley D."/>
            <person name="Thykaer J."/>
            <person name="Frisvad J.C."/>
            <person name="Nielsen K.F."/>
            <person name="Albang R."/>
            <person name="Albermann K."/>
            <person name="Berka R.M."/>
            <person name="Braus G.H."/>
            <person name="Braus-Stromeyer S.A."/>
            <person name="Corrochano L.M."/>
            <person name="Dai Z."/>
            <person name="van Dijck P.W.M."/>
            <person name="Hofmann G."/>
            <person name="Lasure L.L."/>
            <person name="Magnuson J.K."/>
            <person name="Menke H."/>
            <person name="Meijer M."/>
            <person name="Meijer S.L."/>
            <person name="Nielsen J.B."/>
            <person name="Nielsen M.L."/>
            <person name="van Ooyen A.J.J."/>
            <person name="Pel H.J."/>
            <person name="Poulsen L."/>
            <person name="Samson R.A."/>
            <person name="Stam H."/>
            <person name="Tsang A."/>
            <person name="van den Brink J.M."/>
            <person name="Atkins A."/>
            <person name="Aerts A."/>
            <person name="Shapiro H."/>
            <person name="Pangilinan J."/>
            <person name="Salamov A."/>
            <person name="Lou Y."/>
            <person name="Lindquist E."/>
            <person name="Lucas S."/>
            <person name="Grimwood J."/>
            <person name="Grigoriev I.V."/>
            <person name="Kubicek C.P."/>
            <person name="Martinez D."/>
            <person name="van Peij N.N.M.E."/>
            <person name="Roubos J.A."/>
            <person name="Nielsen J."/>
            <person name="Baker S.E."/>
        </authorList>
    </citation>
    <scope>NUCLEOTIDE SEQUENCE [LARGE SCALE GENOMIC DNA]</scope>
    <source>
        <strain>ATCC 1015 / CBS 113.46 / FGSC A1144 / LSHB Ac4 / NCTC 3858a / NRRL 328 / USDA 3528.7</strain>
    </source>
</reference>
<reference key="3">
    <citation type="journal article" date="1997" name="Rapid Commun. Mass Spectrom.">
        <title>Identification of the glycosylation site and glycan structures of recombinant endopolygalacturonase II by mass spectrometry.</title>
        <authorList>
            <person name="Yang Y."/>
            <person name="Bergmann C."/>
            <person name="Benen J."/>
            <person name="Orlando R."/>
        </authorList>
    </citation>
    <scope>GLYCOSYLATION AT ASN-240</scope>
    <scope>IDENTIFICATION BY MASS SPECTROMETRY</scope>
    <source>
        <strain>ATCC 9029 / NRRL 3 / CBS 120.49 / DSM 2466 / N400</strain>
    </source>
</reference>
<reference key="4">
    <citation type="journal article" date="1999" name="J. Biol. Chem.">
        <title>1.68-A crystal structure of endopolygalacturonase II from Aspergillus niger and identification of active site residues by site-directed mutagenesis.</title>
        <authorList>
            <person name="van Santen Y."/>
            <person name="Benen J.A.E."/>
            <person name="Schroeter K.-H."/>
            <person name="Kalk K.H."/>
            <person name="Armand S."/>
            <person name="Visser J."/>
            <person name="Dijkstra B.W."/>
        </authorList>
    </citation>
    <scope>X-RAY CRYSTALLOGRAPHY (1.68 ANGSTROMS)</scope>
    <scope>MUTAGENESIS OF ASP-180; ASP-201; ASP-202; HIS-223; ARG-256 AND LYS-258</scope>
    <source>
        <strain>ATCC 9029 / NRRL 3 / CBS 120.49 / DSM 2466 / N400</strain>
    </source>
</reference>
<gene>
    <name type="primary">pgaII</name>
    <name type="synonym">pg2</name>
    <name type="ORF">ASPNIDRAFT_182156</name>
</gene>
<keyword id="KW-0002">3D-structure</keyword>
<keyword id="KW-0961">Cell wall biogenesis/degradation</keyword>
<keyword id="KW-0903">Direct protein sequencing</keyword>
<keyword id="KW-1015">Disulfide bond</keyword>
<keyword id="KW-0325">Glycoprotein</keyword>
<keyword id="KW-0326">Glycosidase</keyword>
<keyword id="KW-0378">Hydrolase</keyword>
<keyword id="KW-0677">Repeat</keyword>
<keyword id="KW-0964">Secreted</keyword>
<keyword id="KW-0732">Signal</keyword>
<keyword id="KW-0865">Zymogen</keyword>
<protein>
    <recommendedName>
        <fullName>Endopolygalacturonase II</fullName>
        <shortName>EPG-II</shortName>
        <ecNumber>3.2.1.15</ecNumber>
    </recommendedName>
    <alternativeName>
        <fullName>Pectinase 2</fullName>
    </alternativeName>
    <alternativeName>
        <fullName>Polygalacturonase II</fullName>
        <shortName>PG-II</shortName>
    </alternativeName>
    <alternativeName>
        <fullName>Polygalacturonase X2</fullName>
    </alternativeName>
</protein>